<dbReference type="EC" id="4.1.1.-" evidence="1"/>
<dbReference type="EMBL" id="AE009439">
    <property type="protein sequence ID" value="AAM01379.1"/>
    <property type="molecule type" value="Genomic_DNA"/>
</dbReference>
<dbReference type="SMR" id="Q8TYX9"/>
<dbReference type="STRING" id="190192.MK0162"/>
<dbReference type="PaxDb" id="190192-MK0162"/>
<dbReference type="EnsemblBacteria" id="AAM01379">
    <property type="protein sequence ID" value="AAM01379"/>
    <property type="gene ID" value="MK0162"/>
</dbReference>
<dbReference type="KEGG" id="mka:MK0162"/>
<dbReference type="PATRIC" id="fig|190192.8.peg.162"/>
<dbReference type="HOGENOM" id="CLU_072492_2_0_2"/>
<dbReference type="InParanoid" id="Q8TYX9"/>
<dbReference type="Proteomes" id="UP000001826">
    <property type="component" value="Chromosome"/>
</dbReference>
<dbReference type="GO" id="GO:0005886">
    <property type="term" value="C:plasma membrane"/>
    <property type="evidence" value="ECO:0007669"/>
    <property type="project" value="UniProtKB-SubCell"/>
</dbReference>
<dbReference type="GO" id="GO:0004609">
    <property type="term" value="F:phosphatidylserine decarboxylase activity"/>
    <property type="evidence" value="ECO:0007669"/>
    <property type="project" value="InterPro"/>
</dbReference>
<dbReference type="GO" id="GO:0008654">
    <property type="term" value="P:phospholipid biosynthetic process"/>
    <property type="evidence" value="ECO:0007669"/>
    <property type="project" value="UniProtKB-UniRule"/>
</dbReference>
<dbReference type="Gene3D" id="2.40.50.100">
    <property type="match status" value="1"/>
</dbReference>
<dbReference type="HAMAP" id="MF_00664">
    <property type="entry name" value="PS_decarb_PSD_A"/>
    <property type="match status" value="1"/>
</dbReference>
<dbReference type="InterPro" id="IPR003817">
    <property type="entry name" value="PS_Dcarbxylase"/>
</dbReference>
<dbReference type="InterPro" id="IPR033175">
    <property type="entry name" value="PSD-A"/>
</dbReference>
<dbReference type="NCBIfam" id="NF003685">
    <property type="entry name" value="PRK05305.2-5"/>
    <property type="match status" value="1"/>
</dbReference>
<dbReference type="PANTHER" id="PTHR35809">
    <property type="entry name" value="ARCHAETIDYLSERINE DECARBOXYLASE PROENZYME-RELATED"/>
    <property type="match status" value="1"/>
</dbReference>
<dbReference type="PANTHER" id="PTHR35809:SF1">
    <property type="entry name" value="ARCHAETIDYLSERINE DECARBOXYLASE PROENZYME-RELATED"/>
    <property type="match status" value="1"/>
</dbReference>
<dbReference type="Pfam" id="PF02666">
    <property type="entry name" value="PS_Dcarbxylase"/>
    <property type="match status" value="1"/>
</dbReference>
<gene>
    <name evidence="1" type="primary">asd</name>
    <name type="ordered locus">MK0162</name>
</gene>
<accession>Q8TYX9</accession>
<evidence type="ECO:0000255" key="1">
    <source>
        <dbReference type="HAMAP-Rule" id="MF_00664"/>
    </source>
</evidence>
<proteinExistence type="inferred from homology"/>
<protein>
    <recommendedName>
        <fullName evidence="1">Putative archaetidylserine decarboxylase proenzyme</fullName>
        <ecNumber evidence="1">4.1.1.-</ecNumber>
    </recommendedName>
    <component>
        <recommendedName>
            <fullName evidence="1">Archaetidylserine decarboxylase alpha chain</fullName>
        </recommendedName>
    </component>
    <component>
        <recommendedName>
            <fullName evidence="1">Archaetidylserine decarboxylase beta chain</fullName>
        </recommendedName>
    </component>
</protein>
<name>ASD_METKA</name>
<reference key="1">
    <citation type="journal article" date="2002" name="Proc. Natl. Acad. Sci. U.S.A.">
        <title>The complete genome of hyperthermophile Methanopyrus kandleri AV19 and monophyly of archaeal methanogens.</title>
        <authorList>
            <person name="Slesarev A.I."/>
            <person name="Mezhevaya K.V."/>
            <person name="Makarova K.S."/>
            <person name="Polushin N.N."/>
            <person name="Shcherbinina O.V."/>
            <person name="Shakhova V.V."/>
            <person name="Belova G.I."/>
            <person name="Aravind L."/>
            <person name="Natale D.A."/>
            <person name="Rogozin I.B."/>
            <person name="Tatusov R.L."/>
            <person name="Wolf Y.I."/>
            <person name="Stetter K.O."/>
            <person name="Malykh A.G."/>
            <person name="Koonin E.V."/>
            <person name="Kozyavkin S.A."/>
        </authorList>
    </citation>
    <scope>NUCLEOTIDE SEQUENCE [LARGE SCALE GENOMIC DNA]</scope>
    <source>
        <strain>AV19 / DSM 6324 / JCM 9639 / NBRC 100938</strain>
    </source>
</reference>
<sequence length="214" mass="23426">MMAPGWWKFVTPPAALGAALFPWSRPLSFLCLGTAAFLAFFFRNPPREPPSDPSLAVSPADGRLLGYVMEAGEASDDELSSYLDDPITVSVFMSPLDVHVNRAPLDGRVVEAEILKGRFRPAFRKDSATENNRAVLLFDGDPPFVVRLVSGAVARRIDLYVQEGDEVNKGEPIGMIRFGSRVDLAVPRSSVEELLVRKGDSVKAGETPVIRVKR</sequence>
<feature type="chain" id="PRO_0000029827" description="Archaetidylserine decarboxylase beta chain" evidence="1">
    <location>
        <begin position="1"/>
        <end position="179"/>
    </location>
</feature>
<feature type="chain" id="PRO_0000029828" description="Archaetidylserine decarboxylase alpha chain" evidence="1">
    <location>
        <begin position="180"/>
        <end position="214"/>
    </location>
</feature>
<feature type="active site" description="Schiff-base intermediate with substrate; via pyruvic acid" evidence="1">
    <location>
        <position position="180"/>
    </location>
</feature>
<feature type="site" description="Cleavage (non-hydrolytic); by autocatalysis" evidence="1">
    <location>
        <begin position="179"/>
        <end position="180"/>
    </location>
</feature>
<feature type="modified residue" description="Pyruvic acid (Ser); by autocatalysis" evidence="1">
    <location>
        <position position="180"/>
    </location>
</feature>
<organism>
    <name type="scientific">Methanopyrus kandleri (strain AV19 / DSM 6324 / JCM 9639 / NBRC 100938)</name>
    <dbReference type="NCBI Taxonomy" id="190192"/>
    <lineage>
        <taxon>Archaea</taxon>
        <taxon>Methanobacteriati</taxon>
        <taxon>Methanobacteriota</taxon>
        <taxon>Methanomada group</taxon>
        <taxon>Methanopyri</taxon>
        <taxon>Methanopyrales</taxon>
        <taxon>Methanopyraceae</taxon>
        <taxon>Methanopyrus</taxon>
    </lineage>
</organism>
<keyword id="KW-1003">Cell membrane</keyword>
<keyword id="KW-0210">Decarboxylase</keyword>
<keyword id="KW-0444">Lipid biosynthesis</keyword>
<keyword id="KW-0443">Lipid metabolism</keyword>
<keyword id="KW-0456">Lyase</keyword>
<keyword id="KW-0472">Membrane</keyword>
<keyword id="KW-0594">Phospholipid biosynthesis</keyword>
<keyword id="KW-1208">Phospholipid metabolism</keyword>
<keyword id="KW-0670">Pyruvate</keyword>
<keyword id="KW-1185">Reference proteome</keyword>
<keyword id="KW-0865">Zymogen</keyword>
<comment type="function">
    <text evidence="1">Catalyzes the formation of archaetidylethanolamine (PtdEtn) from archaetidylserine (PtdSer).</text>
</comment>
<comment type="catalytic activity">
    <reaction evidence="1">
        <text>archaetidylserine + H(+) = archaetidylethanolamine + CO2</text>
        <dbReference type="Rhea" id="RHEA:51488"/>
        <dbReference type="ChEBI" id="CHEBI:15378"/>
        <dbReference type="ChEBI" id="CHEBI:16526"/>
        <dbReference type="ChEBI" id="CHEBI:71517"/>
        <dbReference type="ChEBI" id="CHEBI:134176"/>
    </reaction>
</comment>
<comment type="cofactor">
    <cofactor evidence="1">
        <name>pyruvate</name>
        <dbReference type="ChEBI" id="CHEBI:15361"/>
    </cofactor>
    <text evidence="1">Binds 1 pyruvoyl group covalently per subunit.</text>
</comment>
<comment type="subunit">
    <text evidence="1">Heterodimer of a large membrane-associated beta subunit and a small pyruvoyl-containing alpha subunit.</text>
</comment>
<comment type="subcellular location">
    <subcellularLocation>
        <location evidence="1">Cell membrane</location>
        <topology evidence="1">Peripheral membrane protein</topology>
    </subcellularLocation>
</comment>
<comment type="PTM">
    <text evidence="1">Is synthesized initially as an inactive proenzyme. Formation of the active enzyme involves a self-maturation process in which the active site pyruvoyl group is generated from an internal serine residue via an autocatalytic post-translational modification. Two non-identical subunits are generated from the proenzyme in this reaction, and the pyruvate is formed at the N-terminus of the alpha chain, which is derived from the carboxyl end of the proenzyme. The post-translation cleavage follows an unusual pathway, termed non-hydrolytic serinolysis, in which the side chain hydroxyl group of the serine supplies its oxygen atom to form the C-terminus of the beta chain, while the remainder of the serine residue undergoes an oxidative deamination to produce ammonia and the pyruvoyl prosthetic group on the alpha chain.</text>
</comment>
<comment type="similarity">
    <text evidence="1">Belongs to the phosphatidylserine decarboxylase family. PSD-A subfamily.</text>
</comment>